<feature type="chain" id="PRO_0000372027" description="GTP cyclohydrolase FolE2">
    <location>
        <begin position="1"/>
        <end position="260"/>
    </location>
</feature>
<feature type="site" description="May be catalytically important" evidence="1">
    <location>
        <position position="146"/>
    </location>
</feature>
<comment type="function">
    <text evidence="1">Converts GTP to 7,8-dihydroneopterin triphosphate.</text>
</comment>
<comment type="catalytic activity">
    <reaction evidence="1">
        <text>GTP + H2O = 7,8-dihydroneopterin 3'-triphosphate + formate + H(+)</text>
        <dbReference type="Rhea" id="RHEA:17473"/>
        <dbReference type="ChEBI" id="CHEBI:15377"/>
        <dbReference type="ChEBI" id="CHEBI:15378"/>
        <dbReference type="ChEBI" id="CHEBI:15740"/>
        <dbReference type="ChEBI" id="CHEBI:37565"/>
        <dbReference type="ChEBI" id="CHEBI:58462"/>
        <dbReference type="EC" id="3.5.4.16"/>
    </reaction>
</comment>
<comment type="pathway">
    <text evidence="1">Cofactor biosynthesis; 7,8-dihydroneopterin triphosphate biosynthesis; 7,8-dihydroneopterin triphosphate from GTP: step 1/1.</text>
</comment>
<comment type="similarity">
    <text evidence="1">Belongs to the GTP cyclohydrolase IV family.</text>
</comment>
<name>GCH4_DESOH</name>
<organism>
    <name type="scientific">Desulfosudis oleivorans (strain DSM 6200 / JCM 39069 / Hxd3)</name>
    <name type="common">Desulfococcus oleovorans</name>
    <dbReference type="NCBI Taxonomy" id="96561"/>
    <lineage>
        <taxon>Bacteria</taxon>
        <taxon>Pseudomonadati</taxon>
        <taxon>Thermodesulfobacteriota</taxon>
        <taxon>Desulfobacteria</taxon>
        <taxon>Desulfobacterales</taxon>
        <taxon>Desulfosudaceae</taxon>
        <taxon>Desulfosudis</taxon>
    </lineage>
</organism>
<evidence type="ECO:0000255" key="1">
    <source>
        <dbReference type="HAMAP-Rule" id="MF_01527"/>
    </source>
</evidence>
<gene>
    <name evidence="1" type="primary">folE2</name>
    <name type="ordered locus">Dole_2224</name>
</gene>
<dbReference type="EC" id="3.5.4.16" evidence="1"/>
<dbReference type="EMBL" id="CP000859">
    <property type="protein sequence ID" value="ABW68028.1"/>
    <property type="molecule type" value="Genomic_DNA"/>
</dbReference>
<dbReference type="RefSeq" id="WP_012175640.1">
    <property type="nucleotide sequence ID" value="NC_009943.1"/>
</dbReference>
<dbReference type="SMR" id="A8ZUJ6"/>
<dbReference type="STRING" id="96561.Dole_2224"/>
<dbReference type="KEGG" id="dol:Dole_2224"/>
<dbReference type="eggNOG" id="COG1469">
    <property type="taxonomic scope" value="Bacteria"/>
</dbReference>
<dbReference type="HOGENOM" id="CLU_062816_1_1_7"/>
<dbReference type="OrthoDB" id="9774824at2"/>
<dbReference type="UniPathway" id="UPA00848">
    <property type="reaction ID" value="UER00151"/>
</dbReference>
<dbReference type="Proteomes" id="UP000008561">
    <property type="component" value="Chromosome"/>
</dbReference>
<dbReference type="GO" id="GO:0003934">
    <property type="term" value="F:GTP cyclohydrolase I activity"/>
    <property type="evidence" value="ECO:0007669"/>
    <property type="project" value="UniProtKB-UniRule"/>
</dbReference>
<dbReference type="GO" id="GO:0046654">
    <property type="term" value="P:tetrahydrofolate biosynthetic process"/>
    <property type="evidence" value="ECO:0007669"/>
    <property type="project" value="UniProtKB-UniRule"/>
</dbReference>
<dbReference type="Gene3D" id="3.10.270.10">
    <property type="entry name" value="Urate Oxidase"/>
    <property type="match status" value="1"/>
</dbReference>
<dbReference type="HAMAP" id="MF_01527_B">
    <property type="entry name" value="GTP_cyclohydrol_B"/>
    <property type="match status" value="1"/>
</dbReference>
<dbReference type="InterPro" id="IPR022838">
    <property type="entry name" value="GTP_cyclohydrolase_FolE2"/>
</dbReference>
<dbReference type="InterPro" id="IPR003801">
    <property type="entry name" value="GTP_cyclohydrolase_FolE2/MptA"/>
</dbReference>
<dbReference type="NCBIfam" id="NF010200">
    <property type="entry name" value="PRK13674.1-1"/>
    <property type="match status" value="1"/>
</dbReference>
<dbReference type="PANTHER" id="PTHR36445">
    <property type="entry name" value="GTP CYCLOHYDROLASE MPTA"/>
    <property type="match status" value="1"/>
</dbReference>
<dbReference type="PANTHER" id="PTHR36445:SF1">
    <property type="entry name" value="GTP CYCLOHYDROLASE MPTA"/>
    <property type="match status" value="1"/>
</dbReference>
<dbReference type="Pfam" id="PF02649">
    <property type="entry name" value="GCHY-1"/>
    <property type="match status" value="1"/>
</dbReference>
<sequence length="260" mass="29398">MKDIQKERDFRNMPIDKVGIKNLKYPIRVLDRKNGCQQTVGTINMYVDLPHESKGTHMSRFVEMLHILQPEISPKTFSVILDQMKKDLDAASAHMEVTFPYFIEKAAPVSGTPGFMEYTCKLMGTSRADGRVDLVSEVVVPISSVCPCSKEISDGGAHNQRGEVRLAIRSKKFVWIEDLIQLVEAAASCELYSVLKRVDEKWVTEKGYQNPKFVEDIVRDVAVALKNDTNITWFNISVENFESIHNHSAYATITCGRINP</sequence>
<keyword id="KW-0378">Hydrolase</keyword>
<keyword id="KW-1185">Reference proteome</keyword>
<proteinExistence type="inferred from homology"/>
<accession>A8ZUJ6</accession>
<reference key="1">
    <citation type="submission" date="2007-10" db="EMBL/GenBank/DDBJ databases">
        <title>Complete sequence of Desulfococcus oleovorans Hxd3.</title>
        <authorList>
            <consortium name="US DOE Joint Genome Institute"/>
            <person name="Copeland A."/>
            <person name="Lucas S."/>
            <person name="Lapidus A."/>
            <person name="Barry K."/>
            <person name="Glavina del Rio T."/>
            <person name="Dalin E."/>
            <person name="Tice H."/>
            <person name="Pitluck S."/>
            <person name="Kiss H."/>
            <person name="Brettin T."/>
            <person name="Bruce D."/>
            <person name="Detter J.C."/>
            <person name="Han C."/>
            <person name="Schmutz J."/>
            <person name="Larimer F."/>
            <person name="Land M."/>
            <person name="Hauser L."/>
            <person name="Kyrpides N."/>
            <person name="Kim E."/>
            <person name="Wawrik B."/>
            <person name="Richardson P."/>
        </authorList>
    </citation>
    <scope>NUCLEOTIDE SEQUENCE [LARGE SCALE GENOMIC DNA]</scope>
    <source>
        <strain>DSM 6200 / JCM 39069 / Hxd3</strain>
    </source>
</reference>
<protein>
    <recommendedName>
        <fullName evidence="1">GTP cyclohydrolase FolE2</fullName>
        <ecNumber evidence="1">3.5.4.16</ecNumber>
    </recommendedName>
</protein>